<reference key="1">
    <citation type="journal article" date="2002" name="J. Bacteriol.">
        <title>Whole-genome comparison of Mycobacterium tuberculosis clinical and laboratory strains.</title>
        <authorList>
            <person name="Fleischmann R.D."/>
            <person name="Alland D."/>
            <person name="Eisen J.A."/>
            <person name="Carpenter L."/>
            <person name="White O."/>
            <person name="Peterson J.D."/>
            <person name="DeBoy R.T."/>
            <person name="Dodson R.J."/>
            <person name="Gwinn M.L."/>
            <person name="Haft D.H."/>
            <person name="Hickey E.K."/>
            <person name="Kolonay J.F."/>
            <person name="Nelson W.C."/>
            <person name="Umayam L.A."/>
            <person name="Ermolaeva M.D."/>
            <person name="Salzberg S.L."/>
            <person name="Delcher A."/>
            <person name="Utterback T.R."/>
            <person name="Weidman J.F."/>
            <person name="Khouri H.M."/>
            <person name="Gill J."/>
            <person name="Mikula A."/>
            <person name="Bishai W."/>
            <person name="Jacobs W.R. Jr."/>
            <person name="Venter J.C."/>
            <person name="Fraser C.M."/>
        </authorList>
    </citation>
    <scope>NUCLEOTIDE SEQUENCE [LARGE SCALE GENOMIC DNA]</scope>
    <source>
        <strain>CDC 1551 / Oshkosh</strain>
    </source>
</reference>
<feature type="chain" id="PRO_0000426949" description="ESX-1 secretion system protein EccA1">
    <location>
        <begin position="1"/>
        <end position="573"/>
    </location>
</feature>
<feature type="binding site" evidence="2">
    <location>
        <begin position="334"/>
        <end position="341"/>
    </location>
    <ligand>
        <name>ATP</name>
        <dbReference type="ChEBI" id="CHEBI:30616"/>
    </ligand>
</feature>
<comment type="function">
    <text evidence="1">Part of the ESX-1 specialized secretion system, which delivers several virulence factors to host cells during infection, including the key virulence factors EsxA (ESAT-6) and EsxB (CFP-10). EccA1 exhibits ATPase activity and may provide energy for the export of ESX-1 substrates.</text>
</comment>
<comment type="subunit">
    <text evidence="1">Part of the ESX-1 / type VII secretion system (T7SS), which is composed of cytosolic and membrane components.</text>
</comment>
<comment type="subcellular location">
    <subcellularLocation>
        <location evidence="1">Cytoplasm</location>
    </subcellularLocation>
</comment>
<comment type="similarity">
    <text evidence="3">Belongs to the CbxX/CfxQ family.</text>
</comment>
<gene>
    <name evidence="1" type="primary">eccA1</name>
    <name type="ordered locus">MT3981</name>
</gene>
<name>ECCA1_MYCTO</name>
<dbReference type="EMBL" id="AE000516">
    <property type="protein sequence ID" value="AAK48349.1"/>
    <property type="molecule type" value="Genomic_DNA"/>
</dbReference>
<dbReference type="PIR" id="B70802">
    <property type="entry name" value="B70802"/>
</dbReference>
<dbReference type="RefSeq" id="WP_003399850.1">
    <property type="nucleotide sequence ID" value="NZ_KK341227.1"/>
</dbReference>
<dbReference type="SMR" id="P9WPH8"/>
<dbReference type="KEGG" id="mtc:MT3981"/>
<dbReference type="PATRIC" id="fig|83331.31.peg.4283"/>
<dbReference type="HOGENOM" id="CLU_008749_5_0_11"/>
<dbReference type="Proteomes" id="UP000001020">
    <property type="component" value="Chromosome"/>
</dbReference>
<dbReference type="GO" id="GO:0005737">
    <property type="term" value="C:cytoplasm"/>
    <property type="evidence" value="ECO:0007669"/>
    <property type="project" value="UniProtKB-SubCell"/>
</dbReference>
<dbReference type="GO" id="GO:0005524">
    <property type="term" value="F:ATP binding"/>
    <property type="evidence" value="ECO:0007669"/>
    <property type="project" value="UniProtKB-KW"/>
</dbReference>
<dbReference type="GO" id="GO:0016887">
    <property type="term" value="F:ATP hydrolysis activity"/>
    <property type="evidence" value="ECO:0007669"/>
    <property type="project" value="InterPro"/>
</dbReference>
<dbReference type="CDD" id="cd00009">
    <property type="entry name" value="AAA"/>
    <property type="match status" value="1"/>
</dbReference>
<dbReference type="FunFam" id="3.40.50.300:FF:000216">
    <property type="entry name" value="Type VII secretion ATPase EccA"/>
    <property type="match status" value="1"/>
</dbReference>
<dbReference type="Gene3D" id="1.10.8.60">
    <property type="match status" value="1"/>
</dbReference>
<dbReference type="Gene3D" id="3.40.50.300">
    <property type="entry name" value="P-loop containing nucleotide triphosphate hydrolases"/>
    <property type="match status" value="1"/>
</dbReference>
<dbReference type="Gene3D" id="1.25.40.10">
    <property type="entry name" value="Tetratricopeptide repeat domain"/>
    <property type="match status" value="1"/>
</dbReference>
<dbReference type="InterPro" id="IPR003593">
    <property type="entry name" value="AAA+_ATPase"/>
</dbReference>
<dbReference type="InterPro" id="IPR041627">
    <property type="entry name" value="AAA_lid_6"/>
</dbReference>
<dbReference type="InterPro" id="IPR003959">
    <property type="entry name" value="ATPase_AAA_core"/>
</dbReference>
<dbReference type="InterPro" id="IPR000641">
    <property type="entry name" value="CbxX/CfxQ"/>
</dbReference>
<dbReference type="InterPro" id="IPR050773">
    <property type="entry name" value="CbxX/CfxQ_RuBisCO_ESX"/>
</dbReference>
<dbReference type="InterPro" id="IPR027417">
    <property type="entry name" value="P-loop_NTPase"/>
</dbReference>
<dbReference type="InterPro" id="IPR023835">
    <property type="entry name" value="T7SS_EccA"/>
</dbReference>
<dbReference type="InterPro" id="IPR049078">
    <property type="entry name" value="T7SS_EccA1-like_N"/>
</dbReference>
<dbReference type="InterPro" id="IPR011990">
    <property type="entry name" value="TPR-like_helical_dom_sf"/>
</dbReference>
<dbReference type="NCBIfam" id="TIGR03922">
    <property type="entry name" value="T7SS_EccA"/>
    <property type="match status" value="1"/>
</dbReference>
<dbReference type="PANTHER" id="PTHR43392">
    <property type="entry name" value="AAA-TYPE ATPASE FAMILY PROTEIN / ANKYRIN REPEAT FAMILY PROTEIN"/>
    <property type="match status" value="1"/>
</dbReference>
<dbReference type="PANTHER" id="PTHR43392:SF2">
    <property type="entry name" value="AAA-TYPE ATPASE FAMILY PROTEIN _ ANKYRIN REPEAT FAMILY PROTEIN"/>
    <property type="match status" value="1"/>
</dbReference>
<dbReference type="Pfam" id="PF00004">
    <property type="entry name" value="AAA"/>
    <property type="match status" value="1"/>
</dbReference>
<dbReference type="Pfam" id="PF17866">
    <property type="entry name" value="AAA_lid_6"/>
    <property type="match status" value="1"/>
</dbReference>
<dbReference type="Pfam" id="PF21545">
    <property type="entry name" value="T7SS_EccA1_N"/>
    <property type="match status" value="1"/>
</dbReference>
<dbReference type="PRINTS" id="PR00819">
    <property type="entry name" value="CBXCFQXSUPER"/>
</dbReference>
<dbReference type="SMART" id="SM00382">
    <property type="entry name" value="AAA"/>
    <property type="match status" value="1"/>
</dbReference>
<dbReference type="SUPFAM" id="SSF52540">
    <property type="entry name" value="P-loop containing nucleoside triphosphate hydrolases"/>
    <property type="match status" value="1"/>
</dbReference>
<protein>
    <recommendedName>
        <fullName evidence="1">ESX-1 secretion system protein EccA1</fullName>
    </recommendedName>
    <alternativeName>
        <fullName evidence="1">ESX conserved component A1</fullName>
    </alternativeName>
    <alternativeName>
        <fullName evidence="1">Type VII secretion system protein EccA1</fullName>
        <shortName evidence="1">T7SS protein EccA1</shortName>
    </alternativeName>
</protein>
<accession>P9WPH8</accession>
<accession>L0TFH7</accession>
<accession>O69733</accession>
<organism>
    <name type="scientific">Mycobacterium tuberculosis (strain CDC 1551 / Oshkosh)</name>
    <dbReference type="NCBI Taxonomy" id="83331"/>
    <lineage>
        <taxon>Bacteria</taxon>
        <taxon>Bacillati</taxon>
        <taxon>Actinomycetota</taxon>
        <taxon>Actinomycetes</taxon>
        <taxon>Mycobacteriales</taxon>
        <taxon>Mycobacteriaceae</taxon>
        <taxon>Mycobacterium</taxon>
        <taxon>Mycobacterium tuberculosis complex</taxon>
    </lineage>
</organism>
<evidence type="ECO:0000250" key="1">
    <source>
        <dbReference type="UniProtKB" id="P9WPH9"/>
    </source>
</evidence>
<evidence type="ECO:0000255" key="2"/>
<evidence type="ECO:0000305" key="3"/>
<proteinExistence type="inferred from homology"/>
<sequence length="573" mass="62426">MTDRLASLFESAVSMLPMSEARSLDLFTEITNYDESACDAWIGRIRCGDTDRVTLFRAWYSRRNFGQLSGSVQISMSTLNARIAIGGLYGDITYPVTSPLAITMGFAACEAAQGNYADAMEALEAAPVAGSEHLVAWMKAVVYGAAERWTDVIDQVKSAGKWPDKFLAGAAGVAHGVAAANLALFTEAERRLTEANDSPAGEACARAIAWYLAMARRSQGNESAAVALLEWLQTTHPEPKVAAALKDPSYRLKTTTAEQIASRADPWDPGSVVTDNSGRERLLAEAQAELDRQIGLTRVKNQIERYRAATLMARVRAAKGMKVAQPSKHMIFTGPPGTGKTTIARVVANILAGLGVIAEPKLVETSRKDFVAEYEGQSAVKTAKTIDQALGGVLFIDEAYALVQERDGRTDPFGQEALDTLLARMENDRDRLVVIIAGYSSDIDRLLETNEGLRSRFATRIEFDTYSPEELLEIANVIAAADDSALTAEAAENFLQAAKQLEQRMLRGRRALDVAGNGRYARQLVEASEQCRDMRLAQVLDIDTLDEDRLREINGSDMAEAIAAVHAHLNMRE</sequence>
<keyword id="KW-0067">ATP-binding</keyword>
<keyword id="KW-0963">Cytoplasm</keyword>
<keyword id="KW-0547">Nucleotide-binding</keyword>
<keyword id="KW-1185">Reference proteome</keyword>